<dbReference type="EC" id="2.4.2.9" evidence="2"/>
<dbReference type="EMBL" id="BX571856">
    <property type="protein sequence ID" value="CAG40176.1"/>
    <property type="molecule type" value="Genomic_DNA"/>
</dbReference>
<dbReference type="RefSeq" id="WP_000003870.1">
    <property type="nucleotide sequence ID" value="NC_002952.2"/>
</dbReference>
<dbReference type="SMR" id="Q6GHN7"/>
<dbReference type="KEGG" id="sar:SAR1174"/>
<dbReference type="HOGENOM" id="CLU_094234_2_1_9"/>
<dbReference type="Proteomes" id="UP000000596">
    <property type="component" value="Chromosome"/>
</dbReference>
<dbReference type="GO" id="GO:0003723">
    <property type="term" value="F:RNA binding"/>
    <property type="evidence" value="ECO:0007669"/>
    <property type="project" value="UniProtKB-UniRule"/>
</dbReference>
<dbReference type="GO" id="GO:0004845">
    <property type="term" value="F:uracil phosphoribosyltransferase activity"/>
    <property type="evidence" value="ECO:0007669"/>
    <property type="project" value="UniProtKB-UniRule"/>
</dbReference>
<dbReference type="GO" id="GO:0006353">
    <property type="term" value="P:DNA-templated transcription termination"/>
    <property type="evidence" value="ECO:0007669"/>
    <property type="project" value="UniProtKB-UniRule"/>
</dbReference>
<dbReference type="CDD" id="cd06223">
    <property type="entry name" value="PRTases_typeI"/>
    <property type="match status" value="1"/>
</dbReference>
<dbReference type="FunFam" id="3.40.50.2020:FF:000020">
    <property type="entry name" value="Bifunctional protein PyrR"/>
    <property type="match status" value="1"/>
</dbReference>
<dbReference type="Gene3D" id="3.40.50.2020">
    <property type="match status" value="1"/>
</dbReference>
<dbReference type="HAMAP" id="MF_01219">
    <property type="entry name" value="PyrR"/>
    <property type="match status" value="1"/>
</dbReference>
<dbReference type="InterPro" id="IPR000836">
    <property type="entry name" value="PRibTrfase_dom"/>
</dbReference>
<dbReference type="InterPro" id="IPR029057">
    <property type="entry name" value="PRTase-like"/>
</dbReference>
<dbReference type="InterPro" id="IPR023050">
    <property type="entry name" value="PyrR"/>
</dbReference>
<dbReference type="InterPro" id="IPR050137">
    <property type="entry name" value="PyrR_bifunctional"/>
</dbReference>
<dbReference type="NCBIfam" id="NF003546">
    <property type="entry name" value="PRK05205.1-2"/>
    <property type="match status" value="1"/>
</dbReference>
<dbReference type="NCBIfam" id="NF003548">
    <property type="entry name" value="PRK05205.1-4"/>
    <property type="match status" value="1"/>
</dbReference>
<dbReference type="NCBIfam" id="NF003549">
    <property type="entry name" value="PRK05205.1-5"/>
    <property type="match status" value="1"/>
</dbReference>
<dbReference type="PANTHER" id="PTHR11608">
    <property type="entry name" value="BIFUNCTIONAL PROTEIN PYRR"/>
    <property type="match status" value="1"/>
</dbReference>
<dbReference type="PANTHER" id="PTHR11608:SF0">
    <property type="entry name" value="BIFUNCTIONAL PROTEIN PYRR"/>
    <property type="match status" value="1"/>
</dbReference>
<dbReference type="Pfam" id="PF00156">
    <property type="entry name" value="Pribosyltran"/>
    <property type="match status" value="1"/>
</dbReference>
<dbReference type="SUPFAM" id="SSF53271">
    <property type="entry name" value="PRTase-like"/>
    <property type="match status" value="1"/>
</dbReference>
<gene>
    <name evidence="2" type="primary">pyrR</name>
    <name type="ordered locus">SAR1174</name>
</gene>
<evidence type="ECO:0000250" key="1"/>
<evidence type="ECO:0000255" key="2">
    <source>
        <dbReference type="HAMAP-Rule" id="MF_01219"/>
    </source>
</evidence>
<keyword id="KW-0328">Glycosyltransferase</keyword>
<keyword id="KW-0694">RNA-binding</keyword>
<keyword id="KW-0804">Transcription</keyword>
<keyword id="KW-0805">Transcription regulation</keyword>
<keyword id="KW-0806">Transcription termination</keyword>
<keyword id="KW-0808">Transferase</keyword>
<reference key="1">
    <citation type="journal article" date="2004" name="Proc. Natl. Acad. Sci. U.S.A.">
        <title>Complete genomes of two clinical Staphylococcus aureus strains: evidence for the rapid evolution of virulence and drug resistance.</title>
        <authorList>
            <person name="Holden M.T.G."/>
            <person name="Feil E.J."/>
            <person name="Lindsay J.A."/>
            <person name="Peacock S.J."/>
            <person name="Day N.P.J."/>
            <person name="Enright M.C."/>
            <person name="Foster T.J."/>
            <person name="Moore C.E."/>
            <person name="Hurst L."/>
            <person name="Atkin R."/>
            <person name="Barron A."/>
            <person name="Bason N."/>
            <person name="Bentley S.D."/>
            <person name="Chillingworth C."/>
            <person name="Chillingworth T."/>
            <person name="Churcher C."/>
            <person name="Clark L."/>
            <person name="Corton C."/>
            <person name="Cronin A."/>
            <person name="Doggett J."/>
            <person name="Dowd L."/>
            <person name="Feltwell T."/>
            <person name="Hance Z."/>
            <person name="Harris B."/>
            <person name="Hauser H."/>
            <person name="Holroyd S."/>
            <person name="Jagels K."/>
            <person name="James K.D."/>
            <person name="Lennard N."/>
            <person name="Line A."/>
            <person name="Mayes R."/>
            <person name="Moule S."/>
            <person name="Mungall K."/>
            <person name="Ormond D."/>
            <person name="Quail M.A."/>
            <person name="Rabbinowitsch E."/>
            <person name="Rutherford K.M."/>
            <person name="Sanders M."/>
            <person name="Sharp S."/>
            <person name="Simmonds M."/>
            <person name="Stevens K."/>
            <person name="Whitehead S."/>
            <person name="Barrell B.G."/>
            <person name="Spratt B.G."/>
            <person name="Parkhill J."/>
        </authorList>
    </citation>
    <scope>NUCLEOTIDE SEQUENCE [LARGE SCALE GENOMIC DNA]</scope>
    <source>
        <strain>MRSA252</strain>
    </source>
</reference>
<feature type="chain" id="PRO_0000183056" description="Bifunctional protein PyrR">
    <location>
        <begin position="1"/>
        <end position="175"/>
    </location>
</feature>
<feature type="short sequence motif" description="PRPP-binding" evidence="2">
    <location>
        <begin position="98"/>
        <end position="110"/>
    </location>
</feature>
<feature type="binding site" evidence="1">
    <location>
        <begin position="40"/>
        <end position="41"/>
    </location>
    <ligand>
        <name>substrate</name>
    </ligand>
</feature>
<feature type="binding site" evidence="1">
    <location>
        <begin position="102"/>
        <end position="110"/>
    </location>
    <ligand>
        <name>substrate</name>
    </ligand>
</feature>
<feature type="binding site" evidence="1">
    <location>
        <position position="135"/>
    </location>
    <ligand>
        <name>substrate</name>
    </ligand>
</feature>
<feature type="binding site" evidence="1">
    <location>
        <position position="159"/>
    </location>
    <ligand>
        <name>substrate</name>
    </ligand>
</feature>
<accession>Q6GHN7</accession>
<comment type="function">
    <text evidence="2">Regulates transcriptional attenuation of the pyrimidine nucleotide (pyr) operon by binding in a uridine-dependent manner to specific sites on pyr mRNA. This disrupts an antiterminator hairpin in the RNA and favors formation of a downstream transcription terminator, leading to a reduced expression of downstream genes.</text>
</comment>
<comment type="function">
    <text evidence="2">Also displays a weak uracil phosphoribosyltransferase activity which is not physiologically significant.</text>
</comment>
<comment type="catalytic activity">
    <reaction evidence="2">
        <text>UMP + diphosphate = 5-phospho-alpha-D-ribose 1-diphosphate + uracil</text>
        <dbReference type="Rhea" id="RHEA:13017"/>
        <dbReference type="ChEBI" id="CHEBI:17568"/>
        <dbReference type="ChEBI" id="CHEBI:33019"/>
        <dbReference type="ChEBI" id="CHEBI:57865"/>
        <dbReference type="ChEBI" id="CHEBI:58017"/>
        <dbReference type="EC" id="2.4.2.9"/>
    </reaction>
</comment>
<comment type="subunit">
    <text evidence="2">Homodimer and homohexamer; in equilibrium.</text>
</comment>
<comment type="similarity">
    <text evidence="2">Belongs to the purine/pyrimidine phosphoribosyltransferase family. PyrR subfamily.</text>
</comment>
<sequence length="175" mass="19855">MSERIIMDDAAIQRTVTRIAHEILEYNKGTDNLILLGIKTRGEYLANRIQDKIHQIEQQRIPTGTIDITYFRDDIEHMSSLTTKDAIDIDTDITDKVVIIIDDVLYTGRTVRASLDAILLNARPIKIGLAALVDRGHRELPIRADFVGKNIPTSKEETVSVYLEEMDQRNAVIIK</sequence>
<organism>
    <name type="scientific">Staphylococcus aureus (strain MRSA252)</name>
    <dbReference type="NCBI Taxonomy" id="282458"/>
    <lineage>
        <taxon>Bacteria</taxon>
        <taxon>Bacillati</taxon>
        <taxon>Bacillota</taxon>
        <taxon>Bacilli</taxon>
        <taxon>Bacillales</taxon>
        <taxon>Staphylococcaceae</taxon>
        <taxon>Staphylococcus</taxon>
    </lineage>
</organism>
<proteinExistence type="inferred from homology"/>
<protein>
    <recommendedName>
        <fullName evidence="2">Bifunctional protein PyrR</fullName>
    </recommendedName>
    <domain>
        <recommendedName>
            <fullName evidence="2">Pyrimidine operon regulatory protein</fullName>
        </recommendedName>
    </domain>
    <domain>
        <recommendedName>
            <fullName evidence="2">Uracil phosphoribosyltransferase</fullName>
            <shortName evidence="2">UPRTase</shortName>
            <ecNumber evidence="2">2.4.2.9</ecNumber>
        </recommendedName>
    </domain>
</protein>
<name>PYRR_STAAR</name>